<reference key="1">
    <citation type="journal article" date="1998" name="Development">
        <title>A novel Dictyostelium cell surface protein important for both cell adhesion and cell sorting.</title>
        <authorList>
            <person name="Ginger R.S."/>
            <person name="Drury L."/>
            <person name="Baader C."/>
            <person name="Zhukovskaya N.V."/>
            <person name="Williams J.G."/>
        </authorList>
    </citation>
    <scope>NUCLEOTIDE SEQUENCE [GENOMIC DNA]</scope>
    <scope>FUNCTION</scope>
    <scope>SUBCELLULAR LOCATION</scope>
    <scope>DEVELOPMENTAL STAGE</scope>
    <scope>REPEAT</scope>
    <source>
        <strain>AX2</strain>
    </source>
</reference>
<reference key="2">
    <citation type="journal article" date="2005" name="Nature">
        <title>The genome of the social amoeba Dictyostelium discoideum.</title>
        <authorList>
            <person name="Eichinger L."/>
            <person name="Pachebat J.A."/>
            <person name="Gloeckner G."/>
            <person name="Rajandream M.A."/>
            <person name="Sucgang R."/>
            <person name="Berriman M."/>
            <person name="Song J."/>
            <person name="Olsen R."/>
            <person name="Szafranski K."/>
            <person name="Xu Q."/>
            <person name="Tunggal B."/>
            <person name="Kummerfeld S."/>
            <person name="Madera M."/>
            <person name="Konfortov B.A."/>
            <person name="Rivero F."/>
            <person name="Bankier A.T."/>
            <person name="Lehmann R."/>
            <person name="Hamlin N."/>
            <person name="Davies R."/>
            <person name="Gaudet P."/>
            <person name="Fey P."/>
            <person name="Pilcher K."/>
            <person name="Chen G."/>
            <person name="Saunders D."/>
            <person name="Sodergren E.J."/>
            <person name="Davis P."/>
            <person name="Kerhornou A."/>
            <person name="Nie X."/>
            <person name="Hall N."/>
            <person name="Anjard C."/>
            <person name="Hemphill L."/>
            <person name="Bason N."/>
            <person name="Farbrother P."/>
            <person name="Desany B."/>
            <person name="Just E."/>
            <person name="Morio T."/>
            <person name="Rost R."/>
            <person name="Churcher C.M."/>
            <person name="Cooper J."/>
            <person name="Haydock S."/>
            <person name="van Driessche N."/>
            <person name="Cronin A."/>
            <person name="Goodhead I."/>
            <person name="Muzny D.M."/>
            <person name="Mourier T."/>
            <person name="Pain A."/>
            <person name="Lu M."/>
            <person name="Harper D."/>
            <person name="Lindsay R."/>
            <person name="Hauser H."/>
            <person name="James K.D."/>
            <person name="Quiles M."/>
            <person name="Madan Babu M."/>
            <person name="Saito T."/>
            <person name="Buchrieser C."/>
            <person name="Wardroper A."/>
            <person name="Felder M."/>
            <person name="Thangavelu M."/>
            <person name="Johnson D."/>
            <person name="Knights A."/>
            <person name="Loulseged H."/>
            <person name="Mungall K.L."/>
            <person name="Oliver K."/>
            <person name="Price C."/>
            <person name="Quail M.A."/>
            <person name="Urushihara H."/>
            <person name="Hernandez J."/>
            <person name="Rabbinowitsch E."/>
            <person name="Steffen D."/>
            <person name="Sanders M."/>
            <person name="Ma J."/>
            <person name="Kohara Y."/>
            <person name="Sharp S."/>
            <person name="Simmonds M.N."/>
            <person name="Spiegler S."/>
            <person name="Tivey A."/>
            <person name="Sugano S."/>
            <person name="White B."/>
            <person name="Walker D."/>
            <person name="Woodward J.R."/>
            <person name="Winckler T."/>
            <person name="Tanaka Y."/>
            <person name="Shaulsky G."/>
            <person name="Schleicher M."/>
            <person name="Weinstock G.M."/>
            <person name="Rosenthal A."/>
            <person name="Cox E.C."/>
            <person name="Chisholm R.L."/>
            <person name="Gibbs R.A."/>
            <person name="Loomis W.F."/>
            <person name="Platzer M."/>
            <person name="Kay R.R."/>
            <person name="Williams J.G."/>
            <person name="Dear P.H."/>
            <person name="Noegel A.A."/>
            <person name="Barrell B.G."/>
            <person name="Kuspa A."/>
        </authorList>
    </citation>
    <scope>NUCLEOTIDE SEQUENCE [LARGE SCALE GENOMIC DNA]</scope>
    <source>
        <strain>AX4</strain>
    </source>
</reference>
<organism>
    <name type="scientific">Dictyostelium discoideum</name>
    <name type="common">Social amoeba</name>
    <dbReference type="NCBI Taxonomy" id="44689"/>
    <lineage>
        <taxon>Eukaryota</taxon>
        <taxon>Amoebozoa</taxon>
        <taxon>Evosea</taxon>
        <taxon>Eumycetozoa</taxon>
        <taxon>Dictyostelia</taxon>
        <taxon>Dictyosteliales</taxon>
        <taxon>Dictyosteliaceae</taxon>
        <taxon>Dictyostelium</taxon>
    </lineage>
</organism>
<protein>
    <recommendedName>
        <fullName>Defective in tip formation protein A</fullName>
    </recommendedName>
    <alternativeName>
        <fullName>Cell surface protein dtfA</fullName>
    </alternativeName>
</protein>
<keyword id="KW-0130">Cell adhesion</keyword>
<keyword id="KW-0131">Cell cycle</keyword>
<keyword id="KW-0132">Cell division</keyword>
<keyword id="KW-0175">Coiled coil</keyword>
<keyword id="KW-0217">Developmental protein</keyword>
<keyword id="KW-0293">Fruiting body</keyword>
<keyword id="KW-1185">Reference proteome</keyword>
<keyword id="KW-0677">Repeat</keyword>
<gene>
    <name type="primary">dtfA</name>
    <name type="ORF">DDB_G0289389</name>
</gene>
<evidence type="ECO:0000255" key="1"/>
<evidence type="ECO:0000256" key="2">
    <source>
        <dbReference type="SAM" id="MobiDB-lite"/>
    </source>
</evidence>
<evidence type="ECO:0000269" key="3">
    <source>
    </source>
</evidence>
<evidence type="ECO:0000305" key="4"/>
<sequence>MKDIEASKKPHTTTVAPPQINFIKNNENIFQPKPISNVTTTTVQPPQIVSPPSPPSPPQTTTIAPPTILPTTKTTTTTTTTTTTTTTVQPPQIVSPPIINNLIIQNNLNTPSLSSTPSPLPNNNNSNENDNDINNLKISKEEYQTQIEIQQQIQRQQILERQQLLQRRNQEQLDLLERHNDYQELINTHQNFVPPNNRFSQQIHVSQLKKQSSQSQLQQQLSSQSLQQIQQKSKQPPPQQQQQQQPPPPPIPLLPQIHQQLKPKQQQEQQQQQEQQQQQTENERINELRRLKRKKEYHNDEYKDDEIYLDNILKGIDIRKLEKLTAVELRKIGKTLGVPMGNNTKGETFQRIKSFIENHKKKKQKYREYQSEKNQQQKSNSKKLVNNSTIYDLPIKDIEHLEQLFWRIFRNIVLFRKIIGNLSRGGFFDQQQQQQQQQQSTMTTTSSSSSPMTSSDDKFFYCYNYIFSKTFKYDQIIHVSWIVDSNYFGLLKYKVSRGDLLVFCNHNTINDGDVNDDEDQNTKYEFCKMFKKIFNSIRSIQDKSFYRDLFTNYSEFIFDRINKRYPIDIYLVGSLAIECNCLVATKLLISEFQFRPVMNHSLQLAIKSGSYKMVKLIVTTIHRQMSLNPNNKPFDIEMFSKINNPSIKIINLLIQLRLFTYSNIINLVIADAKLINDNNENDILQFNKNLKNQIFNYSNLLNSFTFNNNINNNNNNNINNNNNNNNNNNNNNNNNNNNNNSNLSNNTIEYSKIKTKTVFNQFTIKQLINSCKLIVTFDLKNQYQQQYYKRHYEDSDNEEEEEITQASFTINTMAEIEFIETQITKEEKHCFVKKVIQKQLLKDGEKEDYDGIKRLAELYVSLNPHLKVYCNFMYKIIYGNENCYDQDLDDEDLFDYRVTRVFDSNCFKQSLKYGSPGYWIEYKEVEMKYAFLSNKYRNEITPNLLFKYVSPNNLNKQLKFIKKIYNSSIENGNSNGNGNGNGGTVIGGILDRLLLFYLIIENNNLELLSIVIKEFPLISNFCYIAKSNSEIYNLKIPRFIRSIEMLEFCFSNFRDHFYLPQSNSLTADFYGFQNVELLRKYDQLMVLDDMDKGIIVSNKKVRASFDDFHFIFEWGSSLKNYNNYLKMLAYIVEDPYGLYTIVTNEILLLSAILSPTTSSGEPLLNLNIERQLIFQEIISSFSTILEGTELKYYPEQMFQESTHLKRFFDWIFENRSEDLLIGGRCVITQSVQSHMLYRAGRLDIVLRKGYYYDDTNEGSKKIMPVGLALVLDDIGKYGDVVALEKYIRSCIPLMKQQSELLTLLDKDERESRACFSQCQRHFSSLLSKASIYGRINIFQHIFYNHQFIFDKKSLLFARKGFLSKISFKKLILECHYHKQHHILDFIQNVIGLDITPKQIKSN</sequence>
<accession>O96668</accession>
<accession>Q54HK7</accession>
<proteinExistence type="evidence at transcript level"/>
<dbReference type="EMBL" id="AF102575">
    <property type="protein sequence ID" value="AAC98306.1"/>
    <property type="molecule type" value="Genomic_DNA"/>
</dbReference>
<dbReference type="EMBL" id="AAFI02000140">
    <property type="protein sequence ID" value="EAL62722.1"/>
    <property type="molecule type" value="Genomic_DNA"/>
</dbReference>
<dbReference type="PIR" id="T17456">
    <property type="entry name" value="T17456"/>
</dbReference>
<dbReference type="RefSeq" id="XP_636226.1">
    <property type="nucleotide sequence ID" value="XM_631134.1"/>
</dbReference>
<dbReference type="SMR" id="O96668"/>
<dbReference type="FunCoup" id="O96668">
    <property type="interactions" value="1"/>
</dbReference>
<dbReference type="STRING" id="44689.O96668"/>
<dbReference type="GlyGen" id="O96668">
    <property type="glycosylation" value="1 site"/>
</dbReference>
<dbReference type="PaxDb" id="44689-DDB0191273"/>
<dbReference type="EnsemblProtists" id="EAL62722">
    <property type="protein sequence ID" value="EAL62722"/>
    <property type="gene ID" value="DDB_G0289389"/>
</dbReference>
<dbReference type="GeneID" id="8627114"/>
<dbReference type="KEGG" id="ddi:DDB_G0289389"/>
<dbReference type="dictyBase" id="DDB_G0289389">
    <property type="gene designation" value="dtfA"/>
</dbReference>
<dbReference type="VEuPathDB" id="AmoebaDB:DDB_G0289389"/>
<dbReference type="HOGENOM" id="CLU_254260_0_0_1"/>
<dbReference type="InParanoid" id="O96668"/>
<dbReference type="PhylomeDB" id="O96668"/>
<dbReference type="PRO" id="PR:O96668"/>
<dbReference type="Proteomes" id="UP000002195">
    <property type="component" value="Chromosome 5"/>
</dbReference>
<dbReference type="GO" id="GO:0009986">
    <property type="term" value="C:cell surface"/>
    <property type="evidence" value="ECO:0000314"/>
    <property type="project" value="dictyBase"/>
</dbReference>
<dbReference type="GO" id="GO:0098609">
    <property type="term" value="P:cell-cell adhesion"/>
    <property type="evidence" value="ECO:0000315"/>
    <property type="project" value="dictyBase"/>
</dbReference>
<dbReference type="GO" id="GO:0000281">
    <property type="term" value="P:mitotic cytokinesis"/>
    <property type="evidence" value="ECO:0000315"/>
    <property type="project" value="dictyBase"/>
</dbReference>
<dbReference type="GO" id="GO:0030587">
    <property type="term" value="P:sorocarp development"/>
    <property type="evidence" value="ECO:0000315"/>
    <property type="project" value="dictyBase"/>
</dbReference>
<dbReference type="InterPro" id="IPR051904">
    <property type="entry name" value="UPF0746_actin_org"/>
</dbReference>
<dbReference type="PANTHER" id="PTHR32488:SF90">
    <property type="entry name" value="DEFECTIVE IN TIP FORMATION PROTEIN A-RELATED"/>
    <property type="match status" value="1"/>
</dbReference>
<dbReference type="PANTHER" id="PTHR32488">
    <property type="entry name" value="UPF0746 PROTEIN DDB_G0280785-RELATED"/>
    <property type="match status" value="1"/>
</dbReference>
<comment type="function">
    <text evidence="3">Required for correct organization of the actin cytoskeleton and cytokinesis. Also required for apical sorting of prestalk cells, a prerequisite for formation of the tip at the mound stage and subsequent formation of the fruiting body. May be required for cell adhesion.</text>
</comment>
<comment type="subcellular location">
    <subcellularLocation>
        <location evidence="3">Cell surface</location>
    </subcellularLocation>
    <text>Forms a discrete lattice like arrangement at the cell surface.</text>
</comment>
<comment type="developmental stage">
    <text evidence="3">Expressed from the tight mound stage. Also expressed in prespore and prestalk cells.</text>
</comment>
<feature type="chain" id="PRO_0000327965" description="Defective in tip formation protein A">
    <location>
        <begin position="1"/>
        <end position="1402"/>
    </location>
</feature>
<feature type="repeat" description="1" evidence="3">
    <location>
        <begin position="12"/>
        <end position="18"/>
    </location>
</feature>
<feature type="repeat" description="2" evidence="3">
    <location>
        <begin position="40"/>
        <end position="46"/>
    </location>
</feature>
<feature type="repeat" description="3" evidence="3">
    <location>
        <begin position="60"/>
        <end position="66"/>
    </location>
</feature>
<feature type="repeat" description="4" evidence="3">
    <location>
        <begin position="86"/>
        <end position="92"/>
    </location>
</feature>
<feature type="region of interest" description="Disordered" evidence="2">
    <location>
        <begin position="1"/>
        <end position="20"/>
    </location>
</feature>
<feature type="region of interest" description="4 X 7 AA repeat of T-T-T-[IV]-[AQ]-P-P">
    <location>
        <begin position="12"/>
        <end position="92"/>
    </location>
</feature>
<feature type="region of interest" description="Disordered" evidence="2">
    <location>
        <begin position="37"/>
        <end position="94"/>
    </location>
</feature>
<feature type="region of interest" description="Disordered" evidence="2">
    <location>
        <begin position="109"/>
        <end position="133"/>
    </location>
</feature>
<feature type="region of interest" description="Disordered" evidence="2">
    <location>
        <begin position="210"/>
        <end position="292"/>
    </location>
</feature>
<feature type="region of interest" description="Disordered" evidence="2">
    <location>
        <begin position="429"/>
        <end position="453"/>
    </location>
</feature>
<feature type="region of interest" description="Disordered" evidence="2">
    <location>
        <begin position="712"/>
        <end position="745"/>
    </location>
</feature>
<feature type="coiled-coil region" evidence="1">
    <location>
        <begin position="350"/>
        <end position="383"/>
    </location>
</feature>
<feature type="compositionally biased region" description="Low complexity" evidence="2">
    <location>
        <begin position="38"/>
        <end position="47"/>
    </location>
</feature>
<feature type="compositionally biased region" description="Pro residues" evidence="2">
    <location>
        <begin position="48"/>
        <end position="58"/>
    </location>
</feature>
<feature type="compositionally biased region" description="Low complexity" evidence="2">
    <location>
        <begin position="59"/>
        <end position="94"/>
    </location>
</feature>
<feature type="compositionally biased region" description="Low complexity" evidence="2">
    <location>
        <begin position="210"/>
        <end position="234"/>
    </location>
</feature>
<feature type="compositionally biased region" description="Pro residues" evidence="2">
    <location>
        <begin position="235"/>
        <end position="253"/>
    </location>
</feature>
<feature type="compositionally biased region" description="Low complexity" evidence="2">
    <location>
        <begin position="254"/>
        <end position="279"/>
    </location>
</feature>
<feature type="compositionally biased region" description="Low complexity" evidence="2">
    <location>
        <begin position="430"/>
        <end position="453"/>
    </location>
</feature>
<feature type="sequence conflict" description="In Ref. 1; AAC98306." evidence="4" ref="1">
    <original>N</original>
    <variation>I</variation>
    <location>
        <position position="191"/>
    </location>
</feature>
<feature type="sequence conflict" description="In Ref. 1; AAC98306." evidence="4" ref="1">
    <original>F</original>
    <variation>Y</variation>
    <location>
        <position position="471"/>
    </location>
</feature>
<feature type="sequence conflict" description="In Ref. 1; AAC98306." evidence="4" ref="1">
    <original>K</original>
    <variation>E</variation>
    <location>
        <position position="825"/>
    </location>
</feature>
<feature type="sequence conflict" description="In Ref. 1; AAC98306." evidence="4" ref="1">
    <original>K</original>
    <variation>E</variation>
    <location>
        <position position="828"/>
    </location>
</feature>
<feature type="sequence conflict" description="In Ref. 1; AAC98306." evidence="4" ref="1">
    <original>K</original>
    <variation>Q</variation>
    <location>
        <position position="838"/>
    </location>
</feature>
<name>DTFA_DICDI</name>